<dbReference type="EC" id="3.2.1.17"/>
<dbReference type="EMBL" id="AJ250732">
    <property type="protein sequence ID" value="CAB59841.1"/>
    <property type="molecule type" value="mRNA"/>
</dbReference>
<dbReference type="SMR" id="Q9PU28"/>
<dbReference type="CAZy" id="GH22">
    <property type="family name" value="Glycoside Hydrolase Family 22"/>
</dbReference>
<dbReference type="Proteomes" id="UP000694558">
    <property type="component" value="Unplaced"/>
</dbReference>
<dbReference type="GO" id="GO:0005576">
    <property type="term" value="C:extracellular region"/>
    <property type="evidence" value="ECO:0007669"/>
    <property type="project" value="UniProtKB-SubCell"/>
</dbReference>
<dbReference type="GO" id="GO:0003796">
    <property type="term" value="F:lysozyme activity"/>
    <property type="evidence" value="ECO:0007669"/>
    <property type="project" value="UniProtKB-EC"/>
</dbReference>
<dbReference type="GO" id="GO:0042742">
    <property type="term" value="P:defense response to bacterium"/>
    <property type="evidence" value="ECO:0007669"/>
    <property type="project" value="UniProtKB-KW"/>
</dbReference>
<dbReference type="GO" id="GO:0031640">
    <property type="term" value="P:killing of cells of another organism"/>
    <property type="evidence" value="ECO:0007669"/>
    <property type="project" value="UniProtKB-KW"/>
</dbReference>
<dbReference type="CDD" id="cd16897">
    <property type="entry name" value="LYZ_C"/>
    <property type="match status" value="1"/>
</dbReference>
<dbReference type="FunFam" id="1.10.530.10:FF:000001">
    <property type="entry name" value="Lysozyme C"/>
    <property type="match status" value="1"/>
</dbReference>
<dbReference type="Gene3D" id="1.10.530.10">
    <property type="match status" value="1"/>
</dbReference>
<dbReference type="InterPro" id="IPR001916">
    <property type="entry name" value="Glyco_hydro_22"/>
</dbReference>
<dbReference type="InterPro" id="IPR000974">
    <property type="entry name" value="Glyco_hydro_22_lys"/>
</dbReference>
<dbReference type="InterPro" id="IPR023346">
    <property type="entry name" value="Lysozyme-like_dom_sf"/>
</dbReference>
<dbReference type="PANTHER" id="PTHR11407">
    <property type="entry name" value="LYSOZYME C"/>
    <property type="match status" value="1"/>
</dbReference>
<dbReference type="PANTHER" id="PTHR11407:SF63">
    <property type="entry name" value="LYSOZYME C"/>
    <property type="match status" value="1"/>
</dbReference>
<dbReference type="Pfam" id="PF00062">
    <property type="entry name" value="Lys"/>
    <property type="match status" value="1"/>
</dbReference>
<dbReference type="PRINTS" id="PR00137">
    <property type="entry name" value="LYSOZYME"/>
</dbReference>
<dbReference type="PRINTS" id="PR00135">
    <property type="entry name" value="LYZLACT"/>
</dbReference>
<dbReference type="SMART" id="SM00263">
    <property type="entry name" value="LYZ1"/>
    <property type="match status" value="1"/>
</dbReference>
<dbReference type="SUPFAM" id="SSF53955">
    <property type="entry name" value="Lysozyme-like"/>
    <property type="match status" value="1"/>
</dbReference>
<dbReference type="PROSITE" id="PS51348">
    <property type="entry name" value="GLYCOSYL_HYDROL_F22_2"/>
    <property type="match status" value="1"/>
</dbReference>
<protein>
    <recommendedName>
        <fullName>Lysozyme C</fullName>
        <ecNumber>3.2.1.17</ecNumber>
    </recommendedName>
    <alternativeName>
        <fullName>1,4-beta-N-acetylmuramidase C</fullName>
    </alternativeName>
</protein>
<reference key="1">
    <citation type="submission" date="1999-10" db="EMBL/GenBank/DDBJ databases">
        <title>Cloning of the cDNA encoding the Turbot (Scophthalmus maximus) precursor to lysozyme.</title>
        <authorList>
            <person name="Tutundjian R."/>
            <person name="Bultelle F."/>
            <person name="Leboulenger F."/>
            <person name="Danger J.M."/>
        </authorList>
    </citation>
    <scope>NUCLEOTIDE SEQUENCE [MRNA]</scope>
    <source>
        <tissue>Liver</tissue>
    </source>
</reference>
<feature type="signal peptide" evidence="2">
    <location>
        <begin position="1"/>
        <end position="15"/>
    </location>
</feature>
<feature type="chain" id="PRO_0000018503" description="Lysozyme C">
    <location>
        <begin position="16"/>
        <end position="143"/>
    </location>
</feature>
<feature type="domain" description="C-type lysozyme" evidence="3">
    <location>
        <begin position="16"/>
        <end position="143"/>
    </location>
</feature>
<feature type="active site" evidence="3">
    <location>
        <position position="50"/>
    </location>
</feature>
<feature type="active site" evidence="3">
    <location>
        <position position="67"/>
    </location>
</feature>
<feature type="disulfide bond" evidence="3">
    <location>
        <begin position="21"/>
        <end position="141"/>
    </location>
</feature>
<feature type="disulfide bond" evidence="3">
    <location>
        <begin position="45"/>
        <end position="129"/>
    </location>
</feature>
<feature type="disulfide bond" evidence="3">
    <location>
        <begin position="79"/>
        <end position="94"/>
    </location>
</feature>
<feature type="disulfide bond" evidence="3">
    <location>
        <begin position="90"/>
        <end position="108"/>
    </location>
</feature>
<comment type="function">
    <text evidence="3">Lysozymes have primarily a bacteriolytic function; those in tissues and body fluids are associated with the monocyte-macrophage system and enhance the activity of immunoagents.</text>
</comment>
<comment type="catalytic activity">
    <reaction>
        <text>Hydrolysis of (1-&gt;4)-beta-linkages between N-acetylmuramic acid and N-acetyl-D-glucosamine residues in a peptidoglycan and between N-acetyl-D-glucosamine residues in chitodextrins.</text>
        <dbReference type="EC" id="3.2.1.17"/>
    </reaction>
</comment>
<comment type="subunit">
    <text evidence="1">Monomer.</text>
</comment>
<comment type="subcellular location">
    <subcellularLocation>
        <location evidence="1">Secreted</location>
    </subcellularLocation>
</comment>
<comment type="miscellaneous">
    <text>Lysozyme C is capable of both hydrolysis and transglycosylation; it also shows a slight esterase activity. It acts rapidly on both peptide-substituted and unsubstituted peptidoglycan, and slowly on chitin oligosaccharides.</text>
</comment>
<comment type="similarity">
    <text evidence="3">Belongs to the glycosyl hydrolase 22 family.</text>
</comment>
<proteinExistence type="evidence at transcript level"/>
<evidence type="ECO:0000250" key="1"/>
<evidence type="ECO:0000255" key="2"/>
<evidence type="ECO:0000255" key="3">
    <source>
        <dbReference type="PROSITE-ProRule" id="PRU00680"/>
    </source>
</evidence>
<organism>
    <name type="scientific">Scophthalmus maximus</name>
    <name type="common">Turbot</name>
    <name type="synonym">Psetta maxima</name>
    <dbReference type="NCBI Taxonomy" id="52904"/>
    <lineage>
        <taxon>Eukaryota</taxon>
        <taxon>Metazoa</taxon>
        <taxon>Chordata</taxon>
        <taxon>Craniata</taxon>
        <taxon>Vertebrata</taxon>
        <taxon>Euteleostomi</taxon>
        <taxon>Actinopterygii</taxon>
        <taxon>Neopterygii</taxon>
        <taxon>Teleostei</taxon>
        <taxon>Neoteleostei</taxon>
        <taxon>Acanthomorphata</taxon>
        <taxon>Carangaria</taxon>
        <taxon>Pleuronectiformes</taxon>
        <taxon>Pleuronectoidei</taxon>
        <taxon>Scophthalmidae</taxon>
        <taxon>Scophthalmus</taxon>
    </lineage>
</organism>
<accession>Q9PU28</accession>
<keyword id="KW-0929">Antimicrobial</keyword>
<keyword id="KW-0081">Bacteriolytic enzyme</keyword>
<keyword id="KW-1015">Disulfide bond</keyword>
<keyword id="KW-0326">Glycosidase</keyword>
<keyword id="KW-0378">Hydrolase</keyword>
<keyword id="KW-0964">Secreted</keyword>
<keyword id="KW-0732">Signal</keyword>
<gene>
    <name type="primary">lys</name>
</gene>
<sequence length="143" mass="15774">MRCLLLLLLVPVPGAKVFERCEWARLLKRNGMSNYRGISLADWVCLSQWESSYNTRATNRNTDGSTDYGIFQINSRWWCDNGQTPTSNACGISCSALLTDDVGAAIICAKHVVRDPNGIGAWVAWKRHCQGQDLSSYVAGCGV</sequence>
<name>LYSC_SCOMX</name>